<accession>Q4L0Y2</accession>
<proteinExistence type="evidence at transcript level"/>
<gene>
    <name type="primary">ACTB</name>
</gene>
<feature type="chain" id="PRO_0000250521" description="Actin, cytoplasmic 1">
    <location>
        <begin position="1"/>
        <end position="375"/>
    </location>
</feature>
<feature type="initiator methionine" description="Removed; alternate" evidence="2">
    <location>
        <position position="1"/>
    </location>
</feature>
<feature type="chain" id="PRO_0000367084" description="Actin, cytoplasmic 1, N-terminally processed">
    <location>
        <begin position="2"/>
        <end position="375"/>
    </location>
</feature>
<feature type="modified residue" description="N-acetylmethionine" evidence="2">
    <location>
        <position position="1"/>
    </location>
</feature>
<feature type="modified residue" description="N-acetylaspartate; in Actin, cytoplasmic 1, N-terminally processed" evidence="2">
    <location>
        <position position="2"/>
    </location>
</feature>
<feature type="modified residue" description="Methionine (R)-sulfoxide" evidence="3">
    <location>
        <position position="44"/>
    </location>
</feature>
<feature type="modified residue" description="Methionine (R)-sulfoxide" evidence="3">
    <location>
        <position position="47"/>
    </location>
</feature>
<feature type="modified residue" description="Tele-methylhistidine" evidence="3">
    <location>
        <position position="73"/>
    </location>
</feature>
<feature type="modified residue" description="N6-methyllysine" evidence="2">
    <location>
        <position position="84"/>
    </location>
</feature>
<reference key="1">
    <citation type="submission" date="2004-06" db="EMBL/GenBank/DDBJ databases">
        <title>Molecular cloning of beta-actin of Spermophilus citellus.</title>
        <authorList>
            <person name="Stieler J.T."/>
            <person name="Strijkstra A.M."/>
        </authorList>
    </citation>
    <scope>NUCLEOTIDE SEQUENCE [MRNA]</scope>
</reference>
<sequence>MDDDIAALVVDNGSGMCKAGFAGDDAPRAVFPSIVGRPRHQGVMVGMGQKDSYVGDEAQSKRGILTLKYPIEHGIVTNWDDMEKIWHHTFYNELRVAPEEHPVLLTEAPLNPKANREKMTQIMFETFNTPAMYVAIQAVLSLYASGRTTGIVMDSGDGVTHTVPIYEGYALPHAILRLDLAGRDLTDYLMKILTERGYSFTTTAEREIVRDIKEKLCYVALDFEQEMATAASSSSLEKSYELPDGQVITIGNERFRCPEALFQPSFLGMESCGIHETTFNSIMKCDVDIRKDLYANTVLSGGTTMYPGIADRMQKEITALAPSTMKIKIIAPPERKYSVWIGGSILASLSTFQQMWISKQEYDESGPSIVHRKCF</sequence>
<comment type="function">
    <text evidence="2">Actin is a highly conserved protein that polymerizes to produce filaments that form cross-linked networks in the cytoplasm of cells (By similarity). Actin exists in both monomeric (G-actin) and polymeric (F-actin) forms, both forms playing key functions, such as cell motility and contraction (By similarity). In addition to their role in the cytoplasmic cytoskeleton, G- and F-actin also localize in the nucleus, and regulate gene transcription and motility and repair of damaged DNA (By similarity). Plays a role in the assembly of the gamma-tubulin ring complex (gTuRC), which regulates the minus-end nucleation of alpha-beta tubulin heterodimers that grow into microtubule protafilaments (By similarity). Part of the ACTR1A/ACTB filament around which the dynactin complex is built (By similarity). The dynactin multiprotein complex activates the molecular motor dynein for ultra-processive transport along microtubules (By similarity).</text>
</comment>
<comment type="catalytic activity">
    <reaction evidence="4">
        <text>ATP + H2O = ADP + phosphate + H(+)</text>
        <dbReference type="Rhea" id="RHEA:13065"/>
        <dbReference type="ChEBI" id="CHEBI:15377"/>
        <dbReference type="ChEBI" id="CHEBI:15378"/>
        <dbReference type="ChEBI" id="CHEBI:30616"/>
        <dbReference type="ChEBI" id="CHEBI:43474"/>
        <dbReference type="ChEBI" id="CHEBI:456216"/>
    </reaction>
</comment>
<comment type="subunit">
    <text evidence="1 2 3 5">Polymerization of globular actin (G-actin) leads to a structural filament (F-actin) in the form of a two-stranded helix (By similarity). Each actin can bind to 4 others (By similarity). Identified in a IGF2BP1-dependent mRNP granule complex containing untranslated mRNAs (By similarity). Component of the BAF complex, which includes at least actin (ACTB), ARID1A, ARID1B/BAF250, SMARCA2, SMARCA4/BRG1, ACTL6A/BAF53, ACTL6B/BAF53B, SMARCE1/BAF57 SMARCC1/BAF155, SMARCC2/BAF170, SMARCB1/SNF5/INI1, and one or more of SMARCD1/BAF60A, SMARCD2/BAF60B, or SMARCD3/BAF60C (By similarity). In muscle cells, the BAF complex also contains DPF3 (By similarity). Found in a complex with XPO6, Ran, ACTB and PFN1 (By similarity). Interacts with PFN1 (By similarity). Interacts with XPO6 and EMD (By similarity). Interacts with ERBB2 (By similarity). Interacts with GCSAM (By similarity). Interacts with TBC1D21 (By similarity). Interacts with CPNE1 (via VWFA domain) and CPNE4 (via VWFA domain) (By similarity). Interacts with DHX9 (via C-terminus); this interaction is direct and mediates the attachment to nuclear ribonucleoprotein complexes (By similarity). Interacts with FAM107A (By similarity). Associates with the gamma-tubulin ring complex (gTuRC) consisting of TUBGCP2, TUBGCP3, TUBGCP4, TUBGCP5 and TUBGCP6 and gamma-tubulin TUBG1 or TUBG2; within the complex, interacts with TUBGCP3 and TUBGCP6 to form a luminal bridge with MZT1 that stabilizes the initial structure during complex assembly (By similarity). Part of the ACTR1A/ACTB filament around which the dynactin complex is built (By similarity). The filament contains 8 copies of ACTR1A and 1 ACTB (By similarity). Interacts with TPRN which forms ring-like structures in the stereocilium taper region; the interaction may stabilize stereocilia in inner ear hair cells (By similarity). Interacts with AMOTL2 (via N-terminus), the interaction facilitates binding of cell junction complexes to actin fibers in endothelial cells (By similarity).</text>
</comment>
<comment type="subcellular location">
    <subcellularLocation>
        <location evidence="2">Cytoplasm</location>
        <location evidence="2">Cytoskeleton</location>
    </subcellularLocation>
    <subcellularLocation>
        <location evidence="2">Nucleus</location>
    </subcellularLocation>
    <text evidence="2">Localized in cytoplasmic mRNP granules containing untranslated mRNAs.</text>
</comment>
<comment type="PTM">
    <molecule>Actin, cytoplasmic 1</molecule>
    <text evidence="2">N-terminal cleavage of acetylated methionine of immature cytoplasmic actin by ACTMAP.</text>
</comment>
<comment type="PTM">
    <text evidence="2">ISGylated.</text>
</comment>
<comment type="PTM">
    <text evidence="3">Oxidation of Met-44 and Met-47 by MICALs (MICAL1, MICAL2 or MICAL3) to form methionine sulfoxide promotes actin filament depolymerization. MICAL1 and MICAL2 produce the (R)-S-oxide form. The (R)-S-oxide form is reverted by MSRB1 and MSRB2, which promote actin repolymerization.</text>
</comment>
<comment type="PTM">
    <text evidence="2">Monomethylation at Lys-84 (K84me1) regulates actin-myosin interaction and actomyosin-dependent processes. Demethylation by ALKBH4 is required for maintaining actomyosin dynamics supporting normal cleavage furrow ingression during cytokinesis and cell migration.</text>
</comment>
<comment type="PTM">
    <molecule>Actin, cytoplasmic 1, N-terminally processed</molecule>
    <text evidence="2">N-terminal acetylation by NAA80 affects actin filament depolymerization and elongation, including elongation driven by formins. In contrast, filament nucleation by the Arp2/3 complex is not affected.</text>
</comment>
<comment type="PTM">
    <text evidence="2 3">Methylated at His-73 by SETD3 (By similarity). Methylation at His-73 is required for smooth muscle contraction of the laboring uterus during delivery (By similarity).</text>
</comment>
<comment type="miscellaneous">
    <text evidence="2">In vertebrates 3 main groups of actin isoforms, alpha, beta and gamma have been identified. The alpha actins are found in muscle tissues and are a major constituent of the contractile apparatus. The beta and gamma actins coexist in most cell types as components of the cytoskeleton and as mediators of internal cell motility.</text>
</comment>
<comment type="similarity">
    <text evidence="6">Belongs to the actin family.</text>
</comment>
<evidence type="ECO:0000250" key="1">
    <source>
        <dbReference type="UniProtKB" id="O18840"/>
    </source>
</evidence>
<evidence type="ECO:0000250" key="2">
    <source>
        <dbReference type="UniProtKB" id="P60709"/>
    </source>
</evidence>
<evidence type="ECO:0000250" key="3">
    <source>
        <dbReference type="UniProtKB" id="P60710"/>
    </source>
</evidence>
<evidence type="ECO:0000250" key="4">
    <source>
        <dbReference type="UniProtKB" id="P68137"/>
    </source>
</evidence>
<evidence type="ECO:0000250" key="5">
    <source>
        <dbReference type="UniProtKB" id="Q6QAQ1"/>
    </source>
</evidence>
<evidence type="ECO:0000305" key="6"/>
<keyword id="KW-0007">Acetylation</keyword>
<keyword id="KW-0067">ATP-binding</keyword>
<keyword id="KW-0963">Cytoplasm</keyword>
<keyword id="KW-0206">Cytoskeleton</keyword>
<keyword id="KW-0378">Hydrolase</keyword>
<keyword id="KW-0488">Methylation</keyword>
<keyword id="KW-0547">Nucleotide-binding</keyword>
<keyword id="KW-0539">Nucleus</keyword>
<keyword id="KW-0558">Oxidation</keyword>
<keyword id="KW-0832">Ubl conjugation</keyword>
<name>ACTB_SPECI</name>
<organism>
    <name type="scientific">Spermophilus citellus</name>
    <name type="common">European ground squirrel</name>
    <name type="synonym">Citellus citellus</name>
    <dbReference type="NCBI Taxonomy" id="9997"/>
    <lineage>
        <taxon>Eukaryota</taxon>
        <taxon>Metazoa</taxon>
        <taxon>Chordata</taxon>
        <taxon>Craniata</taxon>
        <taxon>Vertebrata</taxon>
        <taxon>Euteleostomi</taxon>
        <taxon>Mammalia</taxon>
        <taxon>Eutheria</taxon>
        <taxon>Euarchontoglires</taxon>
        <taxon>Glires</taxon>
        <taxon>Rodentia</taxon>
        <taxon>Sciuromorpha</taxon>
        <taxon>Sciuridae</taxon>
        <taxon>Xerinae</taxon>
        <taxon>Marmotini</taxon>
        <taxon>Spermophilus</taxon>
    </lineage>
</organism>
<protein>
    <recommendedName>
        <fullName>Actin, cytoplasmic 1</fullName>
        <ecNumber evidence="4">3.6.4.-</ecNumber>
    </recommendedName>
    <alternativeName>
        <fullName>Beta-actin</fullName>
    </alternativeName>
    <component>
        <recommendedName>
            <fullName>Actin, cytoplasmic 1, N-terminally processed</fullName>
        </recommendedName>
    </component>
</protein>
<dbReference type="EC" id="3.6.4.-" evidence="4"/>
<dbReference type="EMBL" id="AY646115">
    <property type="protein sequence ID" value="AAV64181.1"/>
    <property type="molecule type" value="mRNA"/>
</dbReference>
<dbReference type="SMR" id="Q4L0Y2"/>
<dbReference type="GO" id="GO:0015629">
    <property type="term" value="C:actin cytoskeleton"/>
    <property type="evidence" value="ECO:0000250"/>
    <property type="project" value="UniProtKB"/>
</dbReference>
<dbReference type="GO" id="GO:0005856">
    <property type="term" value="C:cytoskeleton"/>
    <property type="evidence" value="ECO:0000250"/>
    <property type="project" value="AgBase"/>
</dbReference>
<dbReference type="GO" id="GO:0097433">
    <property type="term" value="C:dense body"/>
    <property type="evidence" value="ECO:0000250"/>
    <property type="project" value="AgBase"/>
</dbReference>
<dbReference type="GO" id="GO:0005925">
    <property type="term" value="C:focal adhesion"/>
    <property type="evidence" value="ECO:0000250"/>
    <property type="project" value="AgBase"/>
</dbReference>
<dbReference type="GO" id="GO:0005634">
    <property type="term" value="C:nucleus"/>
    <property type="evidence" value="ECO:0000250"/>
    <property type="project" value="UniProtKB"/>
</dbReference>
<dbReference type="GO" id="GO:0005886">
    <property type="term" value="C:plasma membrane"/>
    <property type="evidence" value="ECO:0000250"/>
    <property type="project" value="AgBase"/>
</dbReference>
<dbReference type="GO" id="GO:0032991">
    <property type="term" value="C:protein-containing complex"/>
    <property type="evidence" value="ECO:0000250"/>
    <property type="project" value="UniProtKB"/>
</dbReference>
<dbReference type="GO" id="GO:0005524">
    <property type="term" value="F:ATP binding"/>
    <property type="evidence" value="ECO:0007669"/>
    <property type="project" value="UniProtKB-KW"/>
</dbReference>
<dbReference type="GO" id="GO:0016787">
    <property type="term" value="F:hydrolase activity"/>
    <property type="evidence" value="ECO:0007669"/>
    <property type="project" value="UniProtKB-KW"/>
</dbReference>
<dbReference type="CDD" id="cd10224">
    <property type="entry name" value="ASKHA_NBD_actin"/>
    <property type="match status" value="1"/>
</dbReference>
<dbReference type="FunFam" id="3.30.420.40:FF:000131">
    <property type="entry name" value="Actin, alpha skeletal muscle"/>
    <property type="match status" value="1"/>
</dbReference>
<dbReference type="FunFam" id="3.30.420.40:FF:000291">
    <property type="entry name" value="Actin, alpha skeletal muscle"/>
    <property type="match status" value="1"/>
</dbReference>
<dbReference type="FunFam" id="3.90.640.10:FF:000047">
    <property type="entry name" value="Actin, alpha skeletal muscle"/>
    <property type="match status" value="1"/>
</dbReference>
<dbReference type="FunFam" id="3.30.420.40:FF:000058">
    <property type="entry name" value="Putative actin-related protein 5"/>
    <property type="match status" value="1"/>
</dbReference>
<dbReference type="Gene3D" id="3.30.420.40">
    <property type="match status" value="2"/>
</dbReference>
<dbReference type="Gene3D" id="3.90.640.10">
    <property type="entry name" value="Actin, Chain A, domain 4"/>
    <property type="match status" value="1"/>
</dbReference>
<dbReference type="InterPro" id="IPR004000">
    <property type="entry name" value="Actin"/>
</dbReference>
<dbReference type="InterPro" id="IPR020902">
    <property type="entry name" value="Actin/actin-like_CS"/>
</dbReference>
<dbReference type="InterPro" id="IPR004001">
    <property type="entry name" value="Actin_CS"/>
</dbReference>
<dbReference type="InterPro" id="IPR043129">
    <property type="entry name" value="ATPase_NBD"/>
</dbReference>
<dbReference type="PANTHER" id="PTHR11937">
    <property type="entry name" value="ACTIN"/>
    <property type="match status" value="1"/>
</dbReference>
<dbReference type="Pfam" id="PF00022">
    <property type="entry name" value="Actin"/>
    <property type="match status" value="1"/>
</dbReference>
<dbReference type="PRINTS" id="PR00190">
    <property type="entry name" value="ACTIN"/>
</dbReference>
<dbReference type="SMART" id="SM00268">
    <property type="entry name" value="ACTIN"/>
    <property type="match status" value="1"/>
</dbReference>
<dbReference type="SUPFAM" id="SSF53067">
    <property type="entry name" value="Actin-like ATPase domain"/>
    <property type="match status" value="2"/>
</dbReference>
<dbReference type="PROSITE" id="PS00406">
    <property type="entry name" value="ACTINS_1"/>
    <property type="match status" value="1"/>
</dbReference>
<dbReference type="PROSITE" id="PS00432">
    <property type="entry name" value="ACTINS_2"/>
    <property type="match status" value="1"/>
</dbReference>
<dbReference type="PROSITE" id="PS01132">
    <property type="entry name" value="ACTINS_ACT_LIKE"/>
    <property type="match status" value="1"/>
</dbReference>